<gene>
    <name evidence="1" type="primary">apt</name>
    <name type="ordered locus">Sfri_2408</name>
</gene>
<name>APT_SHEFN</name>
<organism>
    <name type="scientific">Shewanella frigidimarina (strain NCIMB 400)</name>
    <dbReference type="NCBI Taxonomy" id="318167"/>
    <lineage>
        <taxon>Bacteria</taxon>
        <taxon>Pseudomonadati</taxon>
        <taxon>Pseudomonadota</taxon>
        <taxon>Gammaproteobacteria</taxon>
        <taxon>Alteromonadales</taxon>
        <taxon>Shewanellaceae</taxon>
        <taxon>Shewanella</taxon>
    </lineage>
</organism>
<reference key="1">
    <citation type="submission" date="2006-08" db="EMBL/GenBank/DDBJ databases">
        <title>Complete sequence of Shewanella frigidimarina NCIMB 400.</title>
        <authorList>
            <consortium name="US DOE Joint Genome Institute"/>
            <person name="Copeland A."/>
            <person name="Lucas S."/>
            <person name="Lapidus A."/>
            <person name="Barry K."/>
            <person name="Detter J.C."/>
            <person name="Glavina del Rio T."/>
            <person name="Hammon N."/>
            <person name="Israni S."/>
            <person name="Dalin E."/>
            <person name="Tice H."/>
            <person name="Pitluck S."/>
            <person name="Fredrickson J.K."/>
            <person name="Kolker E."/>
            <person name="McCuel L.A."/>
            <person name="DiChristina T."/>
            <person name="Nealson K.H."/>
            <person name="Newman D."/>
            <person name="Tiedje J.M."/>
            <person name="Zhou J."/>
            <person name="Romine M.F."/>
            <person name="Culley D.E."/>
            <person name="Serres M."/>
            <person name="Chertkov O."/>
            <person name="Brettin T."/>
            <person name="Bruce D."/>
            <person name="Han C."/>
            <person name="Tapia R."/>
            <person name="Gilna P."/>
            <person name="Schmutz J."/>
            <person name="Larimer F."/>
            <person name="Land M."/>
            <person name="Hauser L."/>
            <person name="Kyrpides N."/>
            <person name="Mikhailova N."/>
            <person name="Richardson P."/>
        </authorList>
    </citation>
    <scope>NUCLEOTIDE SEQUENCE [LARGE SCALE GENOMIC DNA]</scope>
    <source>
        <strain>NCIMB 400</strain>
    </source>
</reference>
<evidence type="ECO:0000255" key="1">
    <source>
        <dbReference type="HAMAP-Rule" id="MF_00004"/>
    </source>
</evidence>
<dbReference type="EC" id="2.4.2.7" evidence="1"/>
<dbReference type="EMBL" id="CP000447">
    <property type="protein sequence ID" value="ABI72253.1"/>
    <property type="molecule type" value="Genomic_DNA"/>
</dbReference>
<dbReference type="SMR" id="Q080R2"/>
<dbReference type="STRING" id="318167.Sfri_2408"/>
<dbReference type="KEGG" id="sfr:Sfri_2408"/>
<dbReference type="eggNOG" id="COG0503">
    <property type="taxonomic scope" value="Bacteria"/>
</dbReference>
<dbReference type="HOGENOM" id="CLU_063339_3_0_6"/>
<dbReference type="UniPathway" id="UPA00588">
    <property type="reaction ID" value="UER00646"/>
</dbReference>
<dbReference type="Proteomes" id="UP000000684">
    <property type="component" value="Chromosome"/>
</dbReference>
<dbReference type="GO" id="GO:0005737">
    <property type="term" value="C:cytoplasm"/>
    <property type="evidence" value="ECO:0007669"/>
    <property type="project" value="UniProtKB-SubCell"/>
</dbReference>
<dbReference type="GO" id="GO:0002055">
    <property type="term" value="F:adenine binding"/>
    <property type="evidence" value="ECO:0007669"/>
    <property type="project" value="TreeGrafter"/>
</dbReference>
<dbReference type="GO" id="GO:0003999">
    <property type="term" value="F:adenine phosphoribosyltransferase activity"/>
    <property type="evidence" value="ECO:0007669"/>
    <property type="project" value="UniProtKB-UniRule"/>
</dbReference>
<dbReference type="GO" id="GO:0016208">
    <property type="term" value="F:AMP binding"/>
    <property type="evidence" value="ECO:0007669"/>
    <property type="project" value="TreeGrafter"/>
</dbReference>
<dbReference type="GO" id="GO:0006168">
    <property type="term" value="P:adenine salvage"/>
    <property type="evidence" value="ECO:0007669"/>
    <property type="project" value="InterPro"/>
</dbReference>
<dbReference type="GO" id="GO:0044209">
    <property type="term" value="P:AMP salvage"/>
    <property type="evidence" value="ECO:0007669"/>
    <property type="project" value="UniProtKB-UniRule"/>
</dbReference>
<dbReference type="GO" id="GO:0006166">
    <property type="term" value="P:purine ribonucleoside salvage"/>
    <property type="evidence" value="ECO:0007669"/>
    <property type="project" value="UniProtKB-KW"/>
</dbReference>
<dbReference type="CDD" id="cd06223">
    <property type="entry name" value="PRTases_typeI"/>
    <property type="match status" value="1"/>
</dbReference>
<dbReference type="FunFam" id="3.40.50.2020:FF:000004">
    <property type="entry name" value="Adenine phosphoribosyltransferase"/>
    <property type="match status" value="1"/>
</dbReference>
<dbReference type="Gene3D" id="3.40.50.2020">
    <property type="match status" value="1"/>
</dbReference>
<dbReference type="HAMAP" id="MF_00004">
    <property type="entry name" value="Aden_phosphoribosyltr"/>
    <property type="match status" value="1"/>
</dbReference>
<dbReference type="InterPro" id="IPR005764">
    <property type="entry name" value="Ade_phspho_trans"/>
</dbReference>
<dbReference type="InterPro" id="IPR000836">
    <property type="entry name" value="PRibTrfase_dom"/>
</dbReference>
<dbReference type="InterPro" id="IPR029057">
    <property type="entry name" value="PRTase-like"/>
</dbReference>
<dbReference type="InterPro" id="IPR050054">
    <property type="entry name" value="UPRTase/APRTase"/>
</dbReference>
<dbReference type="NCBIfam" id="TIGR01090">
    <property type="entry name" value="apt"/>
    <property type="match status" value="1"/>
</dbReference>
<dbReference type="NCBIfam" id="NF002632">
    <property type="entry name" value="PRK02304.1-1"/>
    <property type="match status" value="1"/>
</dbReference>
<dbReference type="NCBIfam" id="NF002634">
    <property type="entry name" value="PRK02304.1-3"/>
    <property type="match status" value="1"/>
</dbReference>
<dbReference type="NCBIfam" id="NF002636">
    <property type="entry name" value="PRK02304.1-5"/>
    <property type="match status" value="1"/>
</dbReference>
<dbReference type="PANTHER" id="PTHR32315">
    <property type="entry name" value="ADENINE PHOSPHORIBOSYLTRANSFERASE"/>
    <property type="match status" value="1"/>
</dbReference>
<dbReference type="PANTHER" id="PTHR32315:SF3">
    <property type="entry name" value="ADENINE PHOSPHORIBOSYLTRANSFERASE"/>
    <property type="match status" value="1"/>
</dbReference>
<dbReference type="Pfam" id="PF00156">
    <property type="entry name" value="Pribosyltran"/>
    <property type="match status" value="1"/>
</dbReference>
<dbReference type="SUPFAM" id="SSF53271">
    <property type="entry name" value="PRTase-like"/>
    <property type="match status" value="1"/>
</dbReference>
<dbReference type="PROSITE" id="PS00103">
    <property type="entry name" value="PUR_PYR_PR_TRANSFER"/>
    <property type="match status" value="1"/>
</dbReference>
<keyword id="KW-0963">Cytoplasm</keyword>
<keyword id="KW-0328">Glycosyltransferase</keyword>
<keyword id="KW-0660">Purine salvage</keyword>
<keyword id="KW-1185">Reference proteome</keyword>
<keyword id="KW-0808">Transferase</keyword>
<proteinExistence type="inferred from homology"/>
<protein>
    <recommendedName>
        <fullName evidence="1">Adenine phosphoribosyltransferase</fullName>
        <shortName evidence="1">APRT</shortName>
        <ecNumber evidence="1">2.4.2.7</ecNumber>
    </recommendedName>
</protein>
<sequence length="182" mass="19688">MMNQDSLALIKQSIKTIPDYPIPGIMFRDVTSLLENAEAYKATIAILVAHYQSKGFTKVVGTEARGFLFGAPLALELGVGFVPVRKPGKLPRKTISQTYDLEYGKDTLEIHVDAINANDKVLVIDDLLATGGTIEATVKLIRELGGEVSHAAFVISLPEIGGEKRLQGMGIEVLSLCEFDGE</sequence>
<comment type="function">
    <text evidence="1">Catalyzes a salvage reaction resulting in the formation of AMP, that is energically less costly than de novo synthesis.</text>
</comment>
<comment type="catalytic activity">
    <reaction evidence="1">
        <text>AMP + diphosphate = 5-phospho-alpha-D-ribose 1-diphosphate + adenine</text>
        <dbReference type="Rhea" id="RHEA:16609"/>
        <dbReference type="ChEBI" id="CHEBI:16708"/>
        <dbReference type="ChEBI" id="CHEBI:33019"/>
        <dbReference type="ChEBI" id="CHEBI:58017"/>
        <dbReference type="ChEBI" id="CHEBI:456215"/>
        <dbReference type="EC" id="2.4.2.7"/>
    </reaction>
</comment>
<comment type="pathway">
    <text evidence="1">Purine metabolism; AMP biosynthesis via salvage pathway; AMP from adenine: step 1/1.</text>
</comment>
<comment type="subunit">
    <text evidence="1">Homodimer.</text>
</comment>
<comment type="subcellular location">
    <subcellularLocation>
        <location evidence="1">Cytoplasm</location>
    </subcellularLocation>
</comment>
<comment type="similarity">
    <text evidence="1">Belongs to the purine/pyrimidine phosphoribosyltransferase family.</text>
</comment>
<feature type="chain" id="PRO_0000321404" description="Adenine phosphoribosyltransferase">
    <location>
        <begin position="1"/>
        <end position="182"/>
    </location>
</feature>
<accession>Q080R2</accession>